<reference key="1">
    <citation type="journal article" date="1995" name="Yeast">
        <title>The complete sequence of a 9000 bp fragment of the right arm of Saccharomyces cerevisiae chromosome VII contains four previously unknown open reading frames.</title>
        <authorList>
            <person name="Guerreiro P."/>
            <person name="Maia e Silva A."/>
            <person name="Barreiros T."/>
            <person name="Arroyo J."/>
            <person name="Garcia-Gonzalez M."/>
            <person name="Garcia-Saez M.I."/>
            <person name="Rodrigues-Pousada C."/>
            <person name="Nombela C."/>
        </authorList>
    </citation>
    <scope>NUCLEOTIDE SEQUENCE [GENOMIC DNA]</scope>
    <source>
        <strain>ATCC 204508 / S288c</strain>
    </source>
</reference>
<reference key="2">
    <citation type="journal article" date="1997" name="Nature">
        <title>The nucleotide sequence of Saccharomyces cerevisiae chromosome VII.</title>
        <authorList>
            <person name="Tettelin H."/>
            <person name="Agostoni-Carbone M.L."/>
            <person name="Albermann K."/>
            <person name="Albers M."/>
            <person name="Arroyo J."/>
            <person name="Backes U."/>
            <person name="Barreiros T."/>
            <person name="Bertani I."/>
            <person name="Bjourson A.J."/>
            <person name="Brueckner M."/>
            <person name="Bruschi C.V."/>
            <person name="Carignani G."/>
            <person name="Castagnoli L."/>
            <person name="Cerdan E."/>
            <person name="Clemente M.L."/>
            <person name="Coblenz A."/>
            <person name="Coglievina M."/>
            <person name="Coissac E."/>
            <person name="Defoor E."/>
            <person name="Del Bino S."/>
            <person name="Delius H."/>
            <person name="Delneri D."/>
            <person name="de Wergifosse P."/>
            <person name="Dujon B."/>
            <person name="Durand P."/>
            <person name="Entian K.-D."/>
            <person name="Eraso P."/>
            <person name="Escribano V."/>
            <person name="Fabiani L."/>
            <person name="Fartmann B."/>
            <person name="Feroli F."/>
            <person name="Feuermann M."/>
            <person name="Frontali L."/>
            <person name="Garcia-Gonzalez M."/>
            <person name="Garcia-Saez M.I."/>
            <person name="Goffeau A."/>
            <person name="Guerreiro P."/>
            <person name="Hani J."/>
            <person name="Hansen M."/>
            <person name="Hebling U."/>
            <person name="Hernandez K."/>
            <person name="Heumann K."/>
            <person name="Hilger F."/>
            <person name="Hofmann B."/>
            <person name="Indge K.J."/>
            <person name="James C.M."/>
            <person name="Klima R."/>
            <person name="Koetter P."/>
            <person name="Kramer B."/>
            <person name="Kramer W."/>
            <person name="Lauquin G."/>
            <person name="Leuther H."/>
            <person name="Louis E.J."/>
            <person name="Maillier E."/>
            <person name="Marconi A."/>
            <person name="Martegani E."/>
            <person name="Mazon M.J."/>
            <person name="Mazzoni C."/>
            <person name="McReynolds A.D.K."/>
            <person name="Melchioretto P."/>
            <person name="Mewes H.-W."/>
            <person name="Minenkova O."/>
            <person name="Mueller-Auer S."/>
            <person name="Nawrocki A."/>
            <person name="Netter P."/>
            <person name="Neu R."/>
            <person name="Nombela C."/>
            <person name="Oliver S.G."/>
            <person name="Panzeri L."/>
            <person name="Paoluzi S."/>
            <person name="Plevani P."/>
            <person name="Portetelle D."/>
            <person name="Portillo F."/>
            <person name="Potier S."/>
            <person name="Purnelle B."/>
            <person name="Rieger M."/>
            <person name="Riles L."/>
            <person name="Rinaldi T."/>
            <person name="Robben J."/>
            <person name="Rodrigues-Pousada C."/>
            <person name="Rodriguez-Belmonte E."/>
            <person name="Rodriguez-Torres A.M."/>
            <person name="Rose M."/>
            <person name="Ruzzi M."/>
            <person name="Saliola M."/>
            <person name="Sanchez-Perez M."/>
            <person name="Schaefer B."/>
            <person name="Schaefer M."/>
            <person name="Scharfe M."/>
            <person name="Schmidheini T."/>
            <person name="Schreer A."/>
            <person name="Skala J."/>
            <person name="Souciet J.-L."/>
            <person name="Steensma H.Y."/>
            <person name="Talla E."/>
            <person name="Thierry A."/>
            <person name="Vandenbol M."/>
            <person name="van der Aart Q.J.M."/>
            <person name="Van Dyck L."/>
            <person name="Vanoni M."/>
            <person name="Verhasselt P."/>
            <person name="Voet M."/>
            <person name="Volckaert G."/>
            <person name="Wambutt R."/>
            <person name="Watson M.D."/>
            <person name="Weber N."/>
            <person name="Wedler E."/>
            <person name="Wedler H."/>
            <person name="Wipfli P."/>
            <person name="Wolf K."/>
            <person name="Wright L.F."/>
            <person name="Zaccaria P."/>
            <person name="Zimmermann M."/>
            <person name="Zollner A."/>
            <person name="Kleine K."/>
        </authorList>
    </citation>
    <scope>NUCLEOTIDE SEQUENCE [LARGE SCALE GENOMIC DNA]</scope>
    <source>
        <strain>ATCC 204508 / S288c</strain>
    </source>
</reference>
<reference key="3">
    <citation type="journal article" date="2014" name="G3 (Bethesda)">
        <title>The reference genome sequence of Saccharomyces cerevisiae: Then and now.</title>
        <authorList>
            <person name="Engel S.R."/>
            <person name="Dietrich F.S."/>
            <person name="Fisk D.G."/>
            <person name="Binkley G."/>
            <person name="Balakrishnan R."/>
            <person name="Costanzo M.C."/>
            <person name="Dwight S.S."/>
            <person name="Hitz B.C."/>
            <person name="Karra K."/>
            <person name="Nash R.S."/>
            <person name="Weng S."/>
            <person name="Wong E.D."/>
            <person name="Lloyd P."/>
            <person name="Skrzypek M.S."/>
            <person name="Miyasato S.R."/>
            <person name="Simison M."/>
            <person name="Cherry J.M."/>
        </authorList>
    </citation>
    <scope>GENOME REANNOTATION</scope>
    <source>
        <strain>ATCC 204508 / S288c</strain>
    </source>
</reference>
<reference key="4">
    <citation type="journal article" date="2003" name="Mol. Cell">
        <title>Assigning function to yeast proteins by integration of technologies.</title>
        <authorList>
            <person name="Hazbun T.R."/>
            <person name="Malmstroem L."/>
            <person name="Anderson S."/>
            <person name="Graczyk B.J."/>
            <person name="Fox B."/>
            <person name="Riffle M."/>
            <person name="Sundin B.A."/>
            <person name="Aranda J.D."/>
            <person name="McDonald W.H."/>
            <person name="Chiu C.-H."/>
            <person name="Snydsman B.E."/>
            <person name="Bradley P."/>
            <person name="Muller E.G.D."/>
            <person name="Fields S."/>
            <person name="Baker D."/>
            <person name="Yates J.R. III"/>
            <person name="Davis T.N."/>
        </authorList>
    </citation>
    <scope>IDENTIFICATION BY MASS SPECTROMETRY</scope>
    <scope>SUBCELLULAR LOCATION [LARGE SCALE ANALYSIS]</scope>
</reference>
<reference key="5">
    <citation type="journal article" date="2003" name="Nature">
        <title>Global analysis of protein localization in budding yeast.</title>
        <authorList>
            <person name="Huh W.-K."/>
            <person name="Falvo J.V."/>
            <person name="Gerke L.C."/>
            <person name="Carroll A.S."/>
            <person name="Howson R.W."/>
            <person name="Weissman J.S."/>
            <person name="O'Shea E.K."/>
        </authorList>
    </citation>
    <scope>SUBCELLULAR LOCATION [LARGE SCALE ANALYSIS]</scope>
</reference>
<reference key="6">
    <citation type="journal article" date="2003" name="Nature">
        <title>Global analysis of protein expression in yeast.</title>
        <authorList>
            <person name="Ghaemmaghami S."/>
            <person name="Huh W.-K."/>
            <person name="Bower K."/>
            <person name="Howson R.W."/>
            <person name="Belle A."/>
            <person name="Dephoure N."/>
            <person name="O'Shea E.K."/>
            <person name="Weissman J.S."/>
        </authorList>
    </citation>
    <scope>LEVEL OF PROTEIN EXPRESSION [LARGE SCALE ANALYSIS]</scope>
</reference>
<reference key="7">
    <citation type="journal article" date="2006" name="Genes Dev.">
        <title>Systematic identification and functional screens of uncharacterized proteins associated with eukaryotic ribosomal complexes.</title>
        <authorList>
            <person name="Fleischer T.C."/>
            <person name="Weaver C.M."/>
            <person name="McAfee K.J."/>
            <person name="Jennings J.L."/>
            <person name="Link A.J."/>
        </authorList>
    </citation>
    <scope>IDENTIFICATION BY MASS SPECTROMETRY</scope>
    <scope>INTERACTION WITH RIBOSOMES</scope>
</reference>
<reference key="8">
    <citation type="journal article" date="2007" name="J. Cell Biol.">
        <title>YGR198w (YPP1) targets A30P alpha-synuclein to the vacuole for degradation.</title>
        <authorList>
            <person name="Flower T.R."/>
            <person name="Clark-Dixon C."/>
            <person name="Metoyer C."/>
            <person name="Yang H."/>
            <person name="Shi R."/>
            <person name="Zhang Z."/>
            <person name="Witt S.N."/>
        </authorList>
    </citation>
    <scope>FUNCTION</scope>
    <scope>SUBCELLULAR LOCATION</scope>
</reference>
<feature type="chain" id="PRO_0000202843" description="Cargo-transport protein YPP1">
    <location>
        <begin position="1"/>
        <end position="817"/>
    </location>
</feature>
<feature type="helix" evidence="6">
    <location>
        <begin position="17"/>
        <end position="28"/>
    </location>
</feature>
<feature type="helix" evidence="6">
    <location>
        <begin position="39"/>
        <end position="57"/>
    </location>
</feature>
<feature type="helix" evidence="6">
    <location>
        <begin position="63"/>
        <end position="82"/>
    </location>
</feature>
<feature type="turn" evidence="6">
    <location>
        <begin position="85"/>
        <end position="88"/>
    </location>
</feature>
<feature type="helix" evidence="6">
    <location>
        <begin position="90"/>
        <end position="111"/>
    </location>
</feature>
<feature type="helix" evidence="6">
    <location>
        <begin position="114"/>
        <end position="129"/>
    </location>
</feature>
<feature type="helix" evidence="6">
    <location>
        <begin position="137"/>
        <end position="157"/>
    </location>
</feature>
<feature type="helix" evidence="6">
    <location>
        <begin position="161"/>
        <end position="175"/>
    </location>
</feature>
<feature type="helix" evidence="6">
    <location>
        <begin position="185"/>
        <end position="197"/>
    </location>
</feature>
<feature type="helix" evidence="6">
    <location>
        <begin position="203"/>
        <end position="210"/>
    </location>
</feature>
<feature type="helix" evidence="6">
    <location>
        <begin position="217"/>
        <end position="229"/>
    </location>
</feature>
<feature type="helix" evidence="6">
    <location>
        <begin position="239"/>
        <end position="252"/>
    </location>
</feature>
<feature type="helix" evidence="6">
    <location>
        <begin position="264"/>
        <end position="282"/>
    </location>
</feature>
<feature type="helix" evidence="6">
    <location>
        <begin position="291"/>
        <end position="300"/>
    </location>
</feature>
<feature type="helix" evidence="6">
    <location>
        <begin position="306"/>
        <end position="322"/>
    </location>
</feature>
<feature type="helix" evidence="6">
    <location>
        <begin position="326"/>
        <end position="353"/>
    </location>
</feature>
<feature type="helix" evidence="6">
    <location>
        <begin position="361"/>
        <end position="374"/>
    </location>
</feature>
<feature type="helix" evidence="6">
    <location>
        <begin position="377"/>
        <end position="379"/>
    </location>
</feature>
<feature type="turn" evidence="6">
    <location>
        <begin position="382"/>
        <end position="384"/>
    </location>
</feature>
<feature type="helix" evidence="6">
    <location>
        <begin position="387"/>
        <end position="404"/>
    </location>
</feature>
<feature type="helix" evidence="6">
    <location>
        <begin position="414"/>
        <end position="416"/>
    </location>
</feature>
<feature type="helix" evidence="6">
    <location>
        <begin position="418"/>
        <end position="421"/>
    </location>
</feature>
<feature type="helix" evidence="6">
    <location>
        <begin position="429"/>
        <end position="445"/>
    </location>
</feature>
<feature type="helix" evidence="6">
    <location>
        <begin position="446"/>
        <end position="448"/>
    </location>
</feature>
<feature type="helix" evidence="6">
    <location>
        <begin position="450"/>
        <end position="454"/>
    </location>
</feature>
<feature type="helix" evidence="6">
    <location>
        <begin position="457"/>
        <end position="467"/>
    </location>
</feature>
<feature type="helix" evidence="6">
    <location>
        <begin position="485"/>
        <end position="503"/>
    </location>
</feature>
<feature type="helix" evidence="6">
    <location>
        <begin position="507"/>
        <end position="516"/>
    </location>
</feature>
<feature type="turn" evidence="6">
    <location>
        <begin position="517"/>
        <end position="521"/>
    </location>
</feature>
<feature type="helix" evidence="6">
    <location>
        <begin position="526"/>
        <end position="536"/>
    </location>
</feature>
<feature type="strand" evidence="6">
    <location>
        <begin position="538"/>
        <end position="540"/>
    </location>
</feature>
<feature type="helix" evidence="6">
    <location>
        <begin position="543"/>
        <end position="560"/>
    </location>
</feature>
<feature type="helix" evidence="6">
    <location>
        <begin position="569"/>
        <end position="588"/>
    </location>
</feature>
<feature type="helix" evidence="6">
    <location>
        <begin position="590"/>
        <end position="595"/>
    </location>
</feature>
<feature type="helix" evidence="6">
    <location>
        <begin position="598"/>
        <end position="607"/>
    </location>
</feature>
<feature type="helix" evidence="6">
    <location>
        <begin position="614"/>
        <end position="616"/>
    </location>
</feature>
<feature type="strand" evidence="6">
    <location>
        <begin position="619"/>
        <end position="622"/>
    </location>
</feature>
<feature type="helix" evidence="6">
    <location>
        <begin position="626"/>
        <end position="643"/>
    </location>
</feature>
<feature type="strand" evidence="6">
    <location>
        <begin position="644"/>
        <end position="646"/>
    </location>
</feature>
<feature type="helix" evidence="6">
    <location>
        <begin position="649"/>
        <end position="659"/>
    </location>
</feature>
<feature type="strand" evidence="6">
    <location>
        <begin position="663"/>
        <end position="665"/>
    </location>
</feature>
<feature type="helix" evidence="6">
    <location>
        <begin position="668"/>
        <end position="679"/>
    </location>
</feature>
<feature type="helix" evidence="6">
    <location>
        <begin position="686"/>
        <end position="697"/>
    </location>
</feature>
<feature type="helix" evidence="6">
    <location>
        <begin position="702"/>
        <end position="712"/>
    </location>
</feature>
<feature type="helix" evidence="6">
    <location>
        <begin position="747"/>
        <end position="767"/>
    </location>
</feature>
<feature type="helix" evidence="6">
    <location>
        <begin position="769"/>
        <end position="772"/>
    </location>
</feature>
<feature type="helix" evidence="6">
    <location>
        <begin position="775"/>
        <end position="784"/>
    </location>
</feature>
<feature type="helix" evidence="6">
    <location>
        <begin position="791"/>
        <end position="804"/>
    </location>
</feature>
<feature type="helix" evidence="6">
    <location>
        <begin position="812"/>
        <end position="815"/>
    </location>
</feature>
<evidence type="ECO:0000269" key="1">
    <source>
    </source>
</evidence>
<evidence type="ECO:0000269" key="2">
    <source>
    </source>
</evidence>
<evidence type="ECO:0000269" key="3">
    <source>
    </source>
</evidence>
<evidence type="ECO:0000269" key="4">
    <source>
    </source>
</evidence>
<evidence type="ECO:0000305" key="5"/>
<evidence type="ECO:0007829" key="6">
    <source>
        <dbReference type="PDB" id="4N5C"/>
    </source>
</evidence>
<keyword id="KW-0002">3D-structure</keyword>
<keyword id="KW-1003">Cell membrane</keyword>
<keyword id="KW-0254">Endocytosis</keyword>
<keyword id="KW-0472">Membrane</keyword>
<keyword id="KW-1185">Reference proteome</keyword>
<protein>
    <recommendedName>
        <fullName>Cargo-transport protein YPP1</fullName>
    </recommendedName>
    <alternativeName>
        <fullName>Alpha-synuclein protective protein 1</fullName>
    </alternativeName>
</protein>
<gene>
    <name type="primary">YPP1</name>
    <name type="ordered locus">YGR198W</name>
    <name type="ORF">G7594</name>
</gene>
<sequence>MPNSNVRIPPTVPSKIIDVVDQALRARLLGGSTFNSGFDSLDSVLNLQFRLHYHVIGSNGPAKPVCDVLLKESQNLEKNMSMMEELNDYPEITKLVEKILFNCLGILFFHRGQFQESQRCLLHSLKIHNNTASQKTALMEQYDRYLIVENLYYRGLVSQDINIMQNVFYKELLAHVDTIPPESNGLLFEYISLIVAKLRFNQIQDLAENFKTTVENPFILFLYMIKKFQSPLKKHIDNDDLYLKFGQNVLLKAKFPTASETNDEALEHFNVFLQYYFKFTHIKKIKVNPSWYNFIISSMEKTFQSIEVSKTAMFLFQNLSDNSNDEIKKKTFKRESILNFVNFVKYNDKYYQLHDNSHRDIISFIDAYSFILQNSSKTDSIENVFDYDNTVSTFATSLNSFYKEYNLPLMSQSESLDWLENSTRCVYPGNISKVLTNAWSTLYEIRKYQLDFLVSNNLTSYLCNAMMLSTKEKDNADVEEQEEGEEEKALRELQFKYSYTLAQQRHIETAIKTLESLILSKNPNYYKAWHLLALCRSVQEDKEMSYKIVCSVLEAMNESLQNNTLLLNDRWQFIHLKLTQLALIEEIFGTLEALETLPEVFELYATLFPDSQPELNSMGPKYSQTKEYLLQMVWIFAANMYMRTKDNDEDAKAAIKEASNVESKFKNLNCNIANGYLSIIKDEPGVALKEFETVLYYDENNLDALVGFAELIFPEELGVEETNLERYYTLSLDKKPGKRAKLTFVNDTDRSAAYARLKFLLECAILESIEAYYSPEVWWYLSLIYEKYQDDEYKNSLLKCIKYQELNPIRSLRYCNY</sequence>
<accession>P46951</accession>
<accession>D6VUY0</accession>
<proteinExistence type="evidence at protein level"/>
<name>YPP1_YEAST</name>
<organism>
    <name type="scientific">Saccharomyces cerevisiae (strain ATCC 204508 / S288c)</name>
    <name type="common">Baker's yeast</name>
    <dbReference type="NCBI Taxonomy" id="559292"/>
    <lineage>
        <taxon>Eukaryota</taxon>
        <taxon>Fungi</taxon>
        <taxon>Dikarya</taxon>
        <taxon>Ascomycota</taxon>
        <taxon>Saccharomycotina</taxon>
        <taxon>Saccharomycetes</taxon>
        <taxon>Saccharomycetales</taxon>
        <taxon>Saccharomycetaceae</taxon>
        <taxon>Saccharomyces</taxon>
    </lineage>
</organism>
<comment type="function">
    <text evidence="4">Involved in endocytosis.</text>
</comment>
<comment type="subunit">
    <text evidence="3">Interacts with ribosomes.</text>
</comment>
<comment type="interaction">
    <interactant intactId="EBI-23455">
        <id>P46951</id>
    </interactant>
    <interactant intactId="EBI-18454">
        <id>P37297</id>
        <label>STT4</label>
    </interactant>
    <organismsDiffer>false</organismsDiffer>
    <experiments>3</experiments>
</comment>
<comment type="subcellular location">
    <subcellularLocation>
        <location>Cytoplasmic granule</location>
    </subcellularLocation>
    <subcellularLocation>
        <location evidence="2">Cell membrane</location>
        <topology>Peripheral membrane protein</topology>
        <orientation>Cytoplasmic side</orientation>
    </subcellularLocation>
</comment>
<comment type="miscellaneous">
    <text evidence="1">Present with 1640 molecules/cell in log phase SD medium.</text>
</comment>
<comment type="similarity">
    <text evidence="5">Belongs to the YPP1 family.</text>
</comment>
<dbReference type="EMBL" id="X82775">
    <property type="protein sequence ID" value="CAA58017.1"/>
    <property type="molecule type" value="Genomic_DNA"/>
</dbReference>
<dbReference type="EMBL" id="Z72983">
    <property type="protein sequence ID" value="CAA97225.1"/>
    <property type="molecule type" value="Genomic_DNA"/>
</dbReference>
<dbReference type="EMBL" id="BK006941">
    <property type="protein sequence ID" value="DAA08291.1"/>
    <property type="molecule type" value="Genomic_DNA"/>
</dbReference>
<dbReference type="PIR" id="S53921">
    <property type="entry name" value="S53921"/>
</dbReference>
<dbReference type="RefSeq" id="NP_011714.3">
    <property type="nucleotide sequence ID" value="NM_001181327.3"/>
</dbReference>
<dbReference type="PDB" id="4N5C">
    <property type="method" value="X-ray"/>
    <property type="resolution" value="3.25 A"/>
    <property type="chains" value="A/B/C/D/E/F/G/H=11-817"/>
</dbReference>
<dbReference type="PDBsum" id="4N5C"/>
<dbReference type="SMR" id="P46951"/>
<dbReference type="BioGRID" id="33451">
    <property type="interactions" value="134"/>
</dbReference>
<dbReference type="DIP" id="DIP-6350N"/>
<dbReference type="FunCoup" id="P46951">
    <property type="interactions" value="325"/>
</dbReference>
<dbReference type="IntAct" id="P46951">
    <property type="interactions" value="23"/>
</dbReference>
<dbReference type="MINT" id="P46951"/>
<dbReference type="STRING" id="4932.YGR198W"/>
<dbReference type="GlyGen" id="P46951">
    <property type="glycosylation" value="1 site"/>
</dbReference>
<dbReference type="iPTMnet" id="P46951"/>
<dbReference type="PaxDb" id="4932-YGR198W"/>
<dbReference type="PeptideAtlas" id="P46951"/>
<dbReference type="EnsemblFungi" id="YGR198W_mRNA">
    <property type="protein sequence ID" value="YGR198W"/>
    <property type="gene ID" value="YGR198W"/>
</dbReference>
<dbReference type="GeneID" id="853112"/>
<dbReference type="KEGG" id="sce:YGR198W"/>
<dbReference type="AGR" id="SGD:S000003430"/>
<dbReference type="SGD" id="S000003430">
    <property type="gene designation" value="YPP1"/>
</dbReference>
<dbReference type="VEuPathDB" id="FungiDB:YGR198W"/>
<dbReference type="eggNOG" id="ENOG502QV6B">
    <property type="taxonomic scope" value="Eukaryota"/>
</dbReference>
<dbReference type="HOGENOM" id="CLU_019616_0_0_1"/>
<dbReference type="InParanoid" id="P46951"/>
<dbReference type="OMA" id="VSFKIVC"/>
<dbReference type="OrthoDB" id="29013at2759"/>
<dbReference type="BioCyc" id="YEAST:G3O-30884-MONOMER"/>
<dbReference type="BioGRID-ORCS" id="853112">
    <property type="hits" value="0 hits in 10 CRISPR screens"/>
</dbReference>
<dbReference type="EvolutionaryTrace" id="P46951"/>
<dbReference type="PRO" id="PR:P46951"/>
<dbReference type="Proteomes" id="UP000002311">
    <property type="component" value="Chromosome VII"/>
</dbReference>
<dbReference type="RNAct" id="P46951">
    <property type="molecule type" value="protein"/>
</dbReference>
<dbReference type="GO" id="GO:0030479">
    <property type="term" value="C:actin cortical patch"/>
    <property type="evidence" value="ECO:0000314"/>
    <property type="project" value="SGD"/>
</dbReference>
<dbReference type="GO" id="GO:0005737">
    <property type="term" value="C:cytoplasm"/>
    <property type="evidence" value="ECO:0007005"/>
    <property type="project" value="SGD"/>
</dbReference>
<dbReference type="GO" id="GO:0005829">
    <property type="term" value="C:cytosol"/>
    <property type="evidence" value="ECO:0000314"/>
    <property type="project" value="SGD"/>
</dbReference>
<dbReference type="GO" id="GO:0005768">
    <property type="term" value="C:endosome"/>
    <property type="evidence" value="ECO:0000314"/>
    <property type="project" value="SGD"/>
</dbReference>
<dbReference type="GO" id="GO:0005634">
    <property type="term" value="C:nucleus"/>
    <property type="evidence" value="ECO:0007005"/>
    <property type="project" value="SGD"/>
</dbReference>
<dbReference type="GO" id="GO:0005886">
    <property type="term" value="C:plasma membrane"/>
    <property type="evidence" value="ECO:0000314"/>
    <property type="project" value="SGD"/>
</dbReference>
<dbReference type="GO" id="GO:0072659">
    <property type="term" value="P:protein localization to plasma membrane"/>
    <property type="evidence" value="ECO:0000314"/>
    <property type="project" value="SGD"/>
</dbReference>
<dbReference type="GO" id="GO:0006623">
    <property type="term" value="P:protein targeting to vacuole"/>
    <property type="evidence" value="ECO:0000314"/>
    <property type="project" value="SGD"/>
</dbReference>
<dbReference type="GO" id="GO:0006898">
    <property type="term" value="P:receptor-mediated endocytosis"/>
    <property type="evidence" value="ECO:0000314"/>
    <property type="project" value="SGD"/>
</dbReference>
<dbReference type="CDD" id="cd23270">
    <property type="entry name" value="YPP1"/>
    <property type="match status" value="1"/>
</dbReference>
<dbReference type="DisProt" id="DP02752"/>
<dbReference type="Gene3D" id="1.25.40.10">
    <property type="entry name" value="Tetratricopeptide repeat domain"/>
    <property type="match status" value="1"/>
</dbReference>
<dbReference type="InterPro" id="IPR051722">
    <property type="entry name" value="Endocytosis_PI4K-reg_protein"/>
</dbReference>
<dbReference type="InterPro" id="IPR011990">
    <property type="entry name" value="TPR-like_helical_dom_sf"/>
</dbReference>
<dbReference type="PANTHER" id="PTHR23083:SF464">
    <property type="entry name" value="TETRATRICOPEPTIDE REPEAT DOMAIN 7, ISOFORM A"/>
    <property type="match status" value="1"/>
</dbReference>
<dbReference type="PANTHER" id="PTHR23083">
    <property type="entry name" value="TETRATRICOPEPTIDE REPEAT PROTEIN, TPR"/>
    <property type="match status" value="1"/>
</dbReference>
<dbReference type="SUPFAM" id="SSF48452">
    <property type="entry name" value="TPR-like"/>
    <property type="match status" value="1"/>
</dbReference>